<sequence>MEALSQIEGRAIPYGAKNVDTDVIVPAHWLKTITREGLGRGAFETLREVPDNIFDSEEFAGAPILIAGDNFGCGSSREHAAWALLDLGIRAVIAPSFSDIFSSNAFKNGIVTVVLSQYEVDRLMEVAQSDPIAVDLETQTVVTPFQDRFPFEIDPFRKHCLLNGLDEVGLTLTRDAAIADYESRQKTQTPWLTTGTERAA</sequence>
<keyword id="KW-0028">Amino-acid biosynthesis</keyword>
<keyword id="KW-0100">Branched-chain amino acid biosynthesis</keyword>
<keyword id="KW-0432">Leucine biosynthesis</keyword>
<keyword id="KW-0456">Lyase</keyword>
<keyword id="KW-1185">Reference proteome</keyword>
<evidence type="ECO:0000255" key="1">
    <source>
        <dbReference type="HAMAP-Rule" id="MF_01031"/>
    </source>
</evidence>
<feature type="chain" id="PRO_1000063762" description="3-isopropylmalate dehydratase small subunit">
    <location>
        <begin position="1"/>
        <end position="200"/>
    </location>
</feature>
<gene>
    <name evidence="1" type="primary">leuD</name>
    <name type="ordered locus">ELI_03300</name>
</gene>
<organism>
    <name type="scientific">Erythrobacter litoralis (strain HTCC2594)</name>
    <dbReference type="NCBI Taxonomy" id="314225"/>
    <lineage>
        <taxon>Bacteria</taxon>
        <taxon>Pseudomonadati</taxon>
        <taxon>Pseudomonadota</taxon>
        <taxon>Alphaproteobacteria</taxon>
        <taxon>Sphingomonadales</taxon>
        <taxon>Erythrobacteraceae</taxon>
        <taxon>Erythrobacter/Porphyrobacter group</taxon>
        <taxon>Erythrobacter</taxon>
    </lineage>
</organism>
<accession>Q2NC39</accession>
<dbReference type="EC" id="4.2.1.33" evidence="1"/>
<dbReference type="EMBL" id="CP000157">
    <property type="protein sequence ID" value="ABC62752.1"/>
    <property type="molecule type" value="Genomic_DNA"/>
</dbReference>
<dbReference type="RefSeq" id="WP_011413628.1">
    <property type="nucleotide sequence ID" value="NC_007722.1"/>
</dbReference>
<dbReference type="SMR" id="Q2NC39"/>
<dbReference type="STRING" id="314225.ELI_03300"/>
<dbReference type="KEGG" id="eli:ELI_03300"/>
<dbReference type="eggNOG" id="COG0066">
    <property type="taxonomic scope" value="Bacteria"/>
</dbReference>
<dbReference type="HOGENOM" id="CLU_081378_0_3_5"/>
<dbReference type="OrthoDB" id="9777465at2"/>
<dbReference type="UniPathway" id="UPA00048">
    <property type="reaction ID" value="UER00071"/>
</dbReference>
<dbReference type="Proteomes" id="UP000008808">
    <property type="component" value="Chromosome"/>
</dbReference>
<dbReference type="GO" id="GO:0009316">
    <property type="term" value="C:3-isopropylmalate dehydratase complex"/>
    <property type="evidence" value="ECO:0007669"/>
    <property type="project" value="InterPro"/>
</dbReference>
<dbReference type="GO" id="GO:0003861">
    <property type="term" value="F:3-isopropylmalate dehydratase activity"/>
    <property type="evidence" value="ECO:0007669"/>
    <property type="project" value="UniProtKB-UniRule"/>
</dbReference>
<dbReference type="GO" id="GO:0009098">
    <property type="term" value="P:L-leucine biosynthetic process"/>
    <property type="evidence" value="ECO:0007669"/>
    <property type="project" value="UniProtKB-UniRule"/>
</dbReference>
<dbReference type="CDD" id="cd01577">
    <property type="entry name" value="IPMI_Swivel"/>
    <property type="match status" value="1"/>
</dbReference>
<dbReference type="FunFam" id="3.20.19.10:FF:000003">
    <property type="entry name" value="3-isopropylmalate dehydratase small subunit"/>
    <property type="match status" value="1"/>
</dbReference>
<dbReference type="Gene3D" id="3.20.19.10">
    <property type="entry name" value="Aconitase, domain 4"/>
    <property type="match status" value="1"/>
</dbReference>
<dbReference type="HAMAP" id="MF_01031">
    <property type="entry name" value="LeuD_type1"/>
    <property type="match status" value="1"/>
</dbReference>
<dbReference type="InterPro" id="IPR004431">
    <property type="entry name" value="3-IsopropMal_deHydase_ssu"/>
</dbReference>
<dbReference type="InterPro" id="IPR015928">
    <property type="entry name" value="Aconitase/3IPM_dehydase_swvl"/>
</dbReference>
<dbReference type="InterPro" id="IPR000573">
    <property type="entry name" value="AconitaseA/IPMdHydase_ssu_swvl"/>
</dbReference>
<dbReference type="InterPro" id="IPR033940">
    <property type="entry name" value="IPMI_Swivel"/>
</dbReference>
<dbReference type="InterPro" id="IPR050075">
    <property type="entry name" value="LeuD"/>
</dbReference>
<dbReference type="NCBIfam" id="TIGR00171">
    <property type="entry name" value="leuD"/>
    <property type="match status" value="1"/>
</dbReference>
<dbReference type="NCBIfam" id="NF002458">
    <property type="entry name" value="PRK01641.1"/>
    <property type="match status" value="1"/>
</dbReference>
<dbReference type="PANTHER" id="PTHR43345:SF5">
    <property type="entry name" value="3-ISOPROPYLMALATE DEHYDRATASE SMALL SUBUNIT"/>
    <property type="match status" value="1"/>
</dbReference>
<dbReference type="PANTHER" id="PTHR43345">
    <property type="entry name" value="3-ISOPROPYLMALATE DEHYDRATASE SMALL SUBUNIT 2-RELATED-RELATED"/>
    <property type="match status" value="1"/>
</dbReference>
<dbReference type="Pfam" id="PF00694">
    <property type="entry name" value="Aconitase_C"/>
    <property type="match status" value="1"/>
</dbReference>
<dbReference type="SUPFAM" id="SSF52016">
    <property type="entry name" value="LeuD/IlvD-like"/>
    <property type="match status" value="1"/>
</dbReference>
<protein>
    <recommendedName>
        <fullName evidence="1">3-isopropylmalate dehydratase small subunit</fullName>
        <ecNumber evidence="1">4.2.1.33</ecNumber>
    </recommendedName>
    <alternativeName>
        <fullName evidence="1">Alpha-IPM isomerase</fullName>
        <shortName evidence="1">IPMI</shortName>
    </alternativeName>
    <alternativeName>
        <fullName evidence="1">Isopropylmalate isomerase</fullName>
    </alternativeName>
</protein>
<reference key="1">
    <citation type="journal article" date="2009" name="J. Bacteriol.">
        <title>Complete genome sequence of Erythrobacter litoralis HTCC2594.</title>
        <authorList>
            <person name="Oh H.M."/>
            <person name="Giovannoni S.J."/>
            <person name="Ferriera S."/>
            <person name="Johnson J."/>
            <person name="Cho J.C."/>
        </authorList>
    </citation>
    <scope>NUCLEOTIDE SEQUENCE [LARGE SCALE GENOMIC DNA]</scope>
    <source>
        <strain>HTCC2594</strain>
    </source>
</reference>
<proteinExistence type="inferred from homology"/>
<comment type="function">
    <text evidence="1">Catalyzes the isomerization between 2-isopropylmalate and 3-isopropylmalate, via the formation of 2-isopropylmaleate.</text>
</comment>
<comment type="catalytic activity">
    <reaction evidence="1">
        <text>(2R,3S)-3-isopropylmalate = (2S)-2-isopropylmalate</text>
        <dbReference type="Rhea" id="RHEA:32287"/>
        <dbReference type="ChEBI" id="CHEBI:1178"/>
        <dbReference type="ChEBI" id="CHEBI:35121"/>
        <dbReference type="EC" id="4.2.1.33"/>
    </reaction>
</comment>
<comment type="pathway">
    <text evidence="1">Amino-acid biosynthesis; L-leucine biosynthesis; L-leucine from 3-methyl-2-oxobutanoate: step 2/4.</text>
</comment>
<comment type="subunit">
    <text evidence="1">Heterodimer of LeuC and LeuD.</text>
</comment>
<comment type="similarity">
    <text evidence="1">Belongs to the LeuD family. LeuD type 1 subfamily.</text>
</comment>
<name>LEUD_ERYLH</name>